<feature type="signal peptide" evidence="4">
    <location>
        <begin position="1"/>
        <end position="23"/>
    </location>
</feature>
<feature type="chain" id="PRO_0000014826" description="Leukocyte immunoglobulin-like receptor subfamily B member 5">
    <location>
        <begin position="24"/>
        <end position="643"/>
    </location>
</feature>
<feature type="topological domain" description="Extracellular" evidence="4">
    <location>
        <begin position="24"/>
        <end position="458"/>
    </location>
</feature>
<feature type="transmembrane region" description="Helical" evidence="4">
    <location>
        <begin position="459"/>
        <end position="479"/>
    </location>
</feature>
<feature type="topological domain" description="Cytoplasmic" evidence="4">
    <location>
        <begin position="480"/>
        <end position="643"/>
    </location>
</feature>
<feature type="domain" description="Ig-like C2-type 1">
    <location>
        <begin position="27"/>
        <end position="116"/>
    </location>
</feature>
<feature type="domain" description="Ig-like C2-type 2">
    <location>
        <begin position="111"/>
        <end position="228"/>
    </location>
</feature>
<feature type="domain" description="Ig-like C2-type 3">
    <location>
        <begin position="224"/>
        <end position="313"/>
    </location>
</feature>
<feature type="domain" description="Ig-like C2-type 4">
    <location>
        <begin position="337"/>
        <end position="418"/>
    </location>
</feature>
<feature type="region of interest" description="Disordered" evidence="5">
    <location>
        <begin position="417"/>
        <end position="449"/>
    </location>
</feature>
<feature type="region of interest" description="Disordered" evidence="5">
    <location>
        <begin position="493"/>
        <end position="643"/>
    </location>
</feature>
<feature type="short sequence motif" description="ITIM motif 1">
    <location>
        <begin position="605"/>
        <end position="610"/>
    </location>
</feature>
<feature type="short sequence motif" description="ITIM motif 2">
    <location>
        <begin position="635"/>
        <end position="640"/>
    </location>
</feature>
<feature type="compositionally biased region" description="Low complexity" evidence="5">
    <location>
        <begin position="417"/>
        <end position="433"/>
    </location>
</feature>
<feature type="compositionally biased region" description="Basic and acidic residues" evidence="5">
    <location>
        <begin position="531"/>
        <end position="549"/>
    </location>
</feature>
<feature type="compositionally biased region" description="Basic and acidic residues" evidence="5">
    <location>
        <begin position="557"/>
        <end position="567"/>
    </location>
</feature>
<feature type="compositionally biased region" description="Basic and acidic residues" evidence="5">
    <location>
        <begin position="579"/>
        <end position="592"/>
    </location>
</feature>
<feature type="compositionally biased region" description="Basic and acidic residues" evidence="5">
    <location>
        <begin position="615"/>
        <end position="631"/>
    </location>
</feature>
<feature type="modified residue" description="Phosphoserine" evidence="2">
    <location>
        <position position="514"/>
    </location>
</feature>
<feature type="glycosylation site" description="N-linked (GlcNAc...) asparagine" evidence="4">
    <location>
        <position position="139"/>
    </location>
</feature>
<feature type="glycosylation site" description="N-linked (GlcNAc...) asparagine" evidence="4">
    <location>
        <position position="279"/>
    </location>
</feature>
<feature type="glycosylation site" description="N-linked (GlcNAc...) asparagine" evidence="4">
    <location>
        <position position="339"/>
    </location>
</feature>
<feature type="disulfide bond" evidence="3">
    <location>
        <begin position="49"/>
        <end position="98"/>
    </location>
</feature>
<feature type="disulfide bond" evidence="3">
    <location>
        <begin position="144"/>
        <end position="195"/>
    </location>
</feature>
<feature type="disulfide bond" evidence="3">
    <location>
        <begin position="244"/>
        <end position="295"/>
    </location>
</feature>
<feature type="disulfide bond" evidence="3">
    <location>
        <begin position="344"/>
        <end position="395"/>
    </location>
</feature>
<name>LIRB5_PANTR</name>
<accession>Q8MJZ7</accession>
<organism>
    <name type="scientific">Pan troglodytes</name>
    <name type="common">Chimpanzee</name>
    <dbReference type="NCBI Taxonomy" id="9598"/>
    <lineage>
        <taxon>Eukaryota</taxon>
        <taxon>Metazoa</taxon>
        <taxon>Chordata</taxon>
        <taxon>Craniata</taxon>
        <taxon>Vertebrata</taxon>
        <taxon>Euteleostomi</taxon>
        <taxon>Mammalia</taxon>
        <taxon>Eutheria</taxon>
        <taxon>Euarchontoglires</taxon>
        <taxon>Primates</taxon>
        <taxon>Haplorrhini</taxon>
        <taxon>Catarrhini</taxon>
        <taxon>Hominidae</taxon>
        <taxon>Pan</taxon>
    </lineage>
</organism>
<gene>
    <name type="primary">LILRB5</name>
    <name type="synonym">LIR8</name>
</gene>
<keyword id="KW-1064">Adaptive immunity</keyword>
<keyword id="KW-1015">Disulfide bond</keyword>
<keyword id="KW-0325">Glycoprotein</keyword>
<keyword id="KW-0391">Immunity</keyword>
<keyword id="KW-0393">Immunoglobulin domain</keyword>
<keyword id="KW-0472">Membrane</keyword>
<keyword id="KW-0597">Phosphoprotein</keyword>
<keyword id="KW-0675">Receptor</keyword>
<keyword id="KW-1185">Reference proteome</keyword>
<keyword id="KW-0677">Repeat</keyword>
<keyword id="KW-0732">Signal</keyword>
<keyword id="KW-0812">Transmembrane</keyword>
<keyword id="KW-1133">Transmembrane helix</keyword>
<comment type="function">
    <text evidence="1">May act as receptor for class I MHC antigens.</text>
</comment>
<comment type="subcellular location">
    <subcellularLocation>
        <location>Membrane</location>
        <topology>Single-pass type I membrane protein</topology>
    </subcellularLocation>
</comment>
<comment type="domain">
    <text>Contains 2 copies of a cytoplasmic motif that is referred to as the immunoreceptor tyrosine-based inhibitor motif (ITIM). This motif is involved in modulation of cellular responses. The phosphorylated ITIM motif can bind the SH2 domain of several SH2-containing phosphatases.</text>
</comment>
<proteinExistence type="evidence at transcript level"/>
<reference key="1">
    <citation type="journal article" date="2001" name="J. Immunol.">
        <title>Comparison of chimpanzee and human leukocyte Ig-like receptor genes reveals framework and rapidly evolving genes.</title>
        <authorList>
            <person name="Canavez F.C."/>
            <person name="Young N.T."/>
            <person name="Guethlein L.A."/>
            <person name="Rajalingam R."/>
            <person name="Khakoo S.I."/>
            <person name="Shum B.P."/>
            <person name="Parham P."/>
        </authorList>
    </citation>
    <scope>NUCLEOTIDE SEQUENCE [MRNA]</scope>
</reference>
<dbReference type="EMBL" id="AF383164">
    <property type="protein sequence ID" value="AAL31873.1"/>
    <property type="molecule type" value="mRNA"/>
</dbReference>
<dbReference type="RefSeq" id="NP_001009027.1">
    <property type="nucleotide sequence ID" value="NM_001009027.1"/>
</dbReference>
<dbReference type="SMR" id="Q8MJZ7"/>
<dbReference type="FunCoup" id="Q8MJZ7">
    <property type="interactions" value="87"/>
</dbReference>
<dbReference type="STRING" id="9598.ENSPTRP00000087852"/>
<dbReference type="GlyCosmos" id="Q8MJZ7">
    <property type="glycosylation" value="3 sites, No reported glycans"/>
</dbReference>
<dbReference type="PaxDb" id="9598-ENSPTRP00000054290"/>
<dbReference type="GeneID" id="449640"/>
<dbReference type="KEGG" id="ptr:449640"/>
<dbReference type="CTD" id="10990"/>
<dbReference type="eggNOG" id="ENOG502RYEX">
    <property type="taxonomic scope" value="Eukaryota"/>
</dbReference>
<dbReference type="HOGENOM" id="CLU_021100_2_3_1"/>
<dbReference type="InParanoid" id="Q8MJZ7"/>
<dbReference type="TreeFam" id="TF336644"/>
<dbReference type="Proteomes" id="UP000002277">
    <property type="component" value="Unplaced"/>
</dbReference>
<dbReference type="GO" id="GO:0005886">
    <property type="term" value="C:plasma membrane"/>
    <property type="evidence" value="ECO:0000318"/>
    <property type="project" value="GO_Central"/>
</dbReference>
<dbReference type="GO" id="GO:0032396">
    <property type="term" value="F:inhibitory MHC class I receptor activity"/>
    <property type="evidence" value="ECO:0000318"/>
    <property type="project" value="GO_Central"/>
</dbReference>
<dbReference type="GO" id="GO:0002250">
    <property type="term" value="P:adaptive immune response"/>
    <property type="evidence" value="ECO:0007669"/>
    <property type="project" value="UniProtKB-KW"/>
</dbReference>
<dbReference type="GO" id="GO:0019221">
    <property type="term" value="P:cytokine-mediated signaling pathway"/>
    <property type="evidence" value="ECO:0000318"/>
    <property type="project" value="GO_Central"/>
</dbReference>
<dbReference type="GO" id="GO:0002764">
    <property type="term" value="P:immune response-regulating signaling pathway"/>
    <property type="evidence" value="ECO:0000318"/>
    <property type="project" value="GO_Central"/>
</dbReference>
<dbReference type="FunFam" id="2.60.40.10:FF:000049">
    <property type="entry name" value="Leukocyte immunoglobulin-like receptor subfamily B member 1"/>
    <property type="match status" value="4"/>
</dbReference>
<dbReference type="Gene3D" id="2.60.40.10">
    <property type="entry name" value="Immunoglobulins"/>
    <property type="match status" value="4"/>
</dbReference>
<dbReference type="InterPro" id="IPR036179">
    <property type="entry name" value="Ig-like_dom_sf"/>
</dbReference>
<dbReference type="InterPro" id="IPR013783">
    <property type="entry name" value="Ig-like_fold"/>
</dbReference>
<dbReference type="InterPro" id="IPR050412">
    <property type="entry name" value="Ig-like_Receptors_ImmuneReg"/>
</dbReference>
<dbReference type="InterPro" id="IPR003599">
    <property type="entry name" value="Ig_sub"/>
</dbReference>
<dbReference type="InterPro" id="IPR003598">
    <property type="entry name" value="Ig_sub2"/>
</dbReference>
<dbReference type="InterPro" id="IPR013151">
    <property type="entry name" value="Immunoglobulin_dom"/>
</dbReference>
<dbReference type="PANTHER" id="PTHR11738:SF108">
    <property type="entry name" value="LEUKOCYTE IMMUNOGLOBULIN-LIKE RECEPTOR SUBFAMILY B MEMBER 5"/>
    <property type="match status" value="1"/>
</dbReference>
<dbReference type="PANTHER" id="PTHR11738">
    <property type="entry name" value="MHC CLASS I NK CELL RECEPTOR"/>
    <property type="match status" value="1"/>
</dbReference>
<dbReference type="Pfam" id="PF00047">
    <property type="entry name" value="ig"/>
    <property type="match status" value="1"/>
</dbReference>
<dbReference type="Pfam" id="PF13895">
    <property type="entry name" value="Ig_2"/>
    <property type="match status" value="1"/>
</dbReference>
<dbReference type="SMART" id="SM00409">
    <property type="entry name" value="IG"/>
    <property type="match status" value="4"/>
</dbReference>
<dbReference type="SMART" id="SM00408">
    <property type="entry name" value="IGc2"/>
    <property type="match status" value="2"/>
</dbReference>
<dbReference type="SUPFAM" id="SSF48726">
    <property type="entry name" value="Immunoglobulin"/>
    <property type="match status" value="4"/>
</dbReference>
<protein>
    <recommendedName>
        <fullName>Leukocyte immunoglobulin-like receptor subfamily B member 5</fullName>
    </recommendedName>
    <alternativeName>
        <fullName>Leukocyte immunoglobulin-like receptor 8</fullName>
        <shortName>LIR-8</shortName>
    </alternativeName>
</protein>
<sequence>MTLTLSVLICLGLNVGPRTCVQAGTLPKPTLWAEPASVIARGKPVTLWCQGPLETEEYRLDKEGLPWAWERQNPLEPGAKAKFHILSTVYDSAGRYRCYYETPAGWSEPSDPLELVATGFYAEPTLLALPSPVVASGGNVTLQCDTRDGLLTFVLVEEEQKLPRTLYSQKLPKGPSRALFPVGPVTPSFRWRFRCYYYYRKNPQVWSHPSDLLEILVPGVSRKPSLLIPQGSVVARGGSLTLQCRSDVGYDRFVLYKEGGHDLVQGSGQQPQAGLSQANFTLSPVSRSYGGQYRCYGAHNLSPRWSAPSDPLDILIAGLIPDRPSLSVQPGPTVASGENVTLLCQSWRQIDTFFLTKEGAAHPPLCLKSKYQFYKYQAEFSMSPVTSARGGTYRCYSAIRSYPHLLSSPSYPLELVVSGPSGDPSLSPTGSTPTPGPEDQPLTPTGLDPQSGLGRHLGVVTGVSVAFVLLLFLLLFLLLRHRHQSKHRTSAHFYRPAGAAGPEPKDQVLQKRASPVADTQEEILNAAVKDTQPKDGAEMDARQSPRDEDPQAVTYAEVKHSRPRREMASPPSPLSGEFLDTKDTQAEEDRQMDTQAAASEAPQDVTYAQLHSLTLRREATEPPPSQEREPPAEPSIYAPLAIH</sequence>
<evidence type="ECO:0000250" key="1"/>
<evidence type="ECO:0000250" key="2">
    <source>
        <dbReference type="UniProtKB" id="O75023"/>
    </source>
</evidence>
<evidence type="ECO:0000250" key="3">
    <source>
        <dbReference type="UniProtKB" id="Q8NHL6"/>
    </source>
</evidence>
<evidence type="ECO:0000255" key="4"/>
<evidence type="ECO:0000256" key="5">
    <source>
        <dbReference type="SAM" id="MobiDB-lite"/>
    </source>
</evidence>